<keyword id="KW-1185">Reference proteome</keyword>
<proteinExistence type="predicted"/>
<protein>
    <recommendedName>
        <fullName>Uncharacterized protein DDB_G0275275</fullName>
    </recommendedName>
</protein>
<sequence length="542" mass="59715">MRVLVIFIPKSFPNKCLHFKKLGLWIIFQASIKEKSNHQKEILTEQQQQQIINNHINNSISSENLVIPLNNYEESPTQSNISSCYSSQSNLSSYSSTGSLSSYYGSNYYHGASSSSISSINSNIANSNSSSTGRDSTPTPTPTPIQTPSSTPSKKKRSWRIRTPSPKPKLESNNNHHHNHHNYYNNFSEISIELPPTPTYPQKPSFLSNSNQIPRPKSRHSHTNSADSYTSSYSSTYPSSTRSSQKQPPYYQQPINNKNNNNNNNINNFNFNGNNNNNNNNNNNNNNNNNNNNNNNNNNNNNNSNNMKISTSPNKLSNSNHSTNSNFSQCSSSHSLLDTNIGGINVNTQNLVSFTNETSNSGSTIIKPVALKSSSRSVFNSSNNQQYLFSSSTLSSSSSTKTNNNSTTTTTTTTAKTSSTSTNDYSSIKGKSLIDDDASCSISSFNAIEQQVLIPTVLSSSSSSHVMKRSNGSSNGGNSTIQSPSCNQISINKNNLVDIDDEDEDDEDDINGHWEKITIPSNMCRDQISIKNNFDESTKVIC</sequence>
<gene>
    <name type="ORF">DDB_G0275275</name>
</gene>
<reference key="1">
    <citation type="journal article" date="2002" name="Nature">
        <title>Sequence and analysis of chromosome 2 of Dictyostelium discoideum.</title>
        <authorList>
            <person name="Gloeckner G."/>
            <person name="Eichinger L."/>
            <person name="Szafranski K."/>
            <person name="Pachebat J.A."/>
            <person name="Bankier A.T."/>
            <person name="Dear P.H."/>
            <person name="Lehmann R."/>
            <person name="Baumgart C."/>
            <person name="Parra G."/>
            <person name="Abril J.F."/>
            <person name="Guigo R."/>
            <person name="Kumpf K."/>
            <person name="Tunggal B."/>
            <person name="Cox E.C."/>
            <person name="Quail M.A."/>
            <person name="Platzer M."/>
            <person name="Rosenthal A."/>
            <person name="Noegel A.A."/>
        </authorList>
    </citation>
    <scope>NUCLEOTIDE SEQUENCE [LARGE SCALE GENOMIC DNA]</scope>
    <source>
        <strain>AX4</strain>
    </source>
</reference>
<reference key="2">
    <citation type="journal article" date="2005" name="Nature">
        <title>The genome of the social amoeba Dictyostelium discoideum.</title>
        <authorList>
            <person name="Eichinger L."/>
            <person name="Pachebat J.A."/>
            <person name="Gloeckner G."/>
            <person name="Rajandream M.A."/>
            <person name="Sucgang R."/>
            <person name="Berriman M."/>
            <person name="Song J."/>
            <person name="Olsen R."/>
            <person name="Szafranski K."/>
            <person name="Xu Q."/>
            <person name="Tunggal B."/>
            <person name="Kummerfeld S."/>
            <person name="Madera M."/>
            <person name="Konfortov B.A."/>
            <person name="Rivero F."/>
            <person name="Bankier A.T."/>
            <person name="Lehmann R."/>
            <person name="Hamlin N."/>
            <person name="Davies R."/>
            <person name="Gaudet P."/>
            <person name="Fey P."/>
            <person name="Pilcher K."/>
            <person name="Chen G."/>
            <person name="Saunders D."/>
            <person name="Sodergren E.J."/>
            <person name="Davis P."/>
            <person name="Kerhornou A."/>
            <person name="Nie X."/>
            <person name="Hall N."/>
            <person name="Anjard C."/>
            <person name="Hemphill L."/>
            <person name="Bason N."/>
            <person name="Farbrother P."/>
            <person name="Desany B."/>
            <person name="Just E."/>
            <person name="Morio T."/>
            <person name="Rost R."/>
            <person name="Churcher C.M."/>
            <person name="Cooper J."/>
            <person name="Haydock S."/>
            <person name="van Driessche N."/>
            <person name="Cronin A."/>
            <person name="Goodhead I."/>
            <person name="Muzny D.M."/>
            <person name="Mourier T."/>
            <person name="Pain A."/>
            <person name="Lu M."/>
            <person name="Harper D."/>
            <person name="Lindsay R."/>
            <person name="Hauser H."/>
            <person name="James K.D."/>
            <person name="Quiles M."/>
            <person name="Madan Babu M."/>
            <person name="Saito T."/>
            <person name="Buchrieser C."/>
            <person name="Wardroper A."/>
            <person name="Felder M."/>
            <person name="Thangavelu M."/>
            <person name="Johnson D."/>
            <person name="Knights A."/>
            <person name="Loulseged H."/>
            <person name="Mungall K.L."/>
            <person name="Oliver K."/>
            <person name="Price C."/>
            <person name="Quail M.A."/>
            <person name="Urushihara H."/>
            <person name="Hernandez J."/>
            <person name="Rabbinowitsch E."/>
            <person name="Steffen D."/>
            <person name="Sanders M."/>
            <person name="Ma J."/>
            <person name="Kohara Y."/>
            <person name="Sharp S."/>
            <person name="Simmonds M.N."/>
            <person name="Spiegler S."/>
            <person name="Tivey A."/>
            <person name="Sugano S."/>
            <person name="White B."/>
            <person name="Walker D."/>
            <person name="Woodward J.R."/>
            <person name="Winckler T."/>
            <person name="Tanaka Y."/>
            <person name="Shaulsky G."/>
            <person name="Schleicher M."/>
            <person name="Weinstock G.M."/>
            <person name="Rosenthal A."/>
            <person name="Cox E.C."/>
            <person name="Chisholm R.L."/>
            <person name="Gibbs R.A."/>
            <person name="Loomis W.F."/>
            <person name="Platzer M."/>
            <person name="Kay R.R."/>
            <person name="Williams J.G."/>
            <person name="Dear P.H."/>
            <person name="Noegel A.A."/>
            <person name="Barrell B.G."/>
            <person name="Kuspa A."/>
        </authorList>
    </citation>
    <scope>NUCLEOTIDE SEQUENCE [LARGE SCALE GENOMIC DNA]</scope>
    <source>
        <strain>AX4</strain>
    </source>
</reference>
<organism>
    <name type="scientific">Dictyostelium discoideum</name>
    <name type="common">Social amoeba</name>
    <dbReference type="NCBI Taxonomy" id="44689"/>
    <lineage>
        <taxon>Eukaryota</taxon>
        <taxon>Amoebozoa</taxon>
        <taxon>Evosea</taxon>
        <taxon>Eumycetozoa</taxon>
        <taxon>Dictyostelia</taxon>
        <taxon>Dictyosteliales</taxon>
        <taxon>Dictyosteliaceae</taxon>
        <taxon>Dictyostelium</taxon>
    </lineage>
</organism>
<accession>Q86I32</accession>
<accession>Q554B0</accession>
<name>Y7617_DICDI</name>
<evidence type="ECO:0000256" key="1">
    <source>
        <dbReference type="SAM" id="MobiDB-lite"/>
    </source>
</evidence>
<feature type="chain" id="PRO_0000348135" description="Uncharacterized protein DDB_G0275275">
    <location>
        <begin position="1"/>
        <end position="542"/>
    </location>
</feature>
<feature type="region of interest" description="Disordered" evidence="1">
    <location>
        <begin position="125"/>
        <end position="182"/>
    </location>
</feature>
<feature type="region of interest" description="Disordered" evidence="1">
    <location>
        <begin position="194"/>
        <end position="333"/>
    </location>
</feature>
<feature type="region of interest" description="Disordered" evidence="1">
    <location>
        <begin position="390"/>
        <end position="428"/>
    </location>
</feature>
<feature type="region of interest" description="Disordered" evidence="1">
    <location>
        <begin position="459"/>
        <end position="487"/>
    </location>
</feature>
<feature type="compositionally biased region" description="Low complexity" evidence="1">
    <location>
        <begin position="125"/>
        <end position="138"/>
    </location>
</feature>
<feature type="compositionally biased region" description="Polar residues" evidence="1">
    <location>
        <begin position="202"/>
        <end position="213"/>
    </location>
</feature>
<feature type="compositionally biased region" description="Low complexity" evidence="1">
    <location>
        <begin position="228"/>
        <end position="306"/>
    </location>
</feature>
<feature type="compositionally biased region" description="Low complexity" evidence="1">
    <location>
        <begin position="314"/>
        <end position="333"/>
    </location>
</feature>
<feature type="compositionally biased region" description="Low complexity" evidence="1">
    <location>
        <begin position="390"/>
        <end position="423"/>
    </location>
</feature>
<feature type="compositionally biased region" description="Low complexity" evidence="1">
    <location>
        <begin position="459"/>
        <end position="479"/>
    </location>
</feature>
<dbReference type="EMBL" id="AAFI02000013">
    <property type="protein sequence ID" value="EAL69918.1"/>
    <property type="molecule type" value="Genomic_DNA"/>
</dbReference>
<dbReference type="RefSeq" id="XP_643801.1">
    <property type="nucleotide sequence ID" value="XM_638709.1"/>
</dbReference>
<dbReference type="FunCoup" id="Q86I32">
    <property type="interactions" value="877"/>
</dbReference>
<dbReference type="GlyGen" id="Q86I32">
    <property type="glycosylation" value="4 sites"/>
</dbReference>
<dbReference type="PaxDb" id="44689-DDB0217617"/>
<dbReference type="EnsemblProtists" id="EAL69918">
    <property type="protein sequence ID" value="EAL69918"/>
    <property type="gene ID" value="DDB_G0275275"/>
</dbReference>
<dbReference type="GeneID" id="8619846"/>
<dbReference type="KEGG" id="ddi:DDB_G0275275"/>
<dbReference type="dictyBase" id="DDB_G0275275"/>
<dbReference type="VEuPathDB" id="AmoebaDB:DDB_G0275275"/>
<dbReference type="eggNOG" id="ENOG502RHFJ">
    <property type="taxonomic scope" value="Eukaryota"/>
</dbReference>
<dbReference type="HOGENOM" id="CLU_502925_0_0_1"/>
<dbReference type="InParanoid" id="Q86I32"/>
<dbReference type="OMA" id="INGHWEK"/>
<dbReference type="PRO" id="PR:Q86I32"/>
<dbReference type="Proteomes" id="UP000002195">
    <property type="component" value="Chromosome 2"/>
</dbReference>